<sequence>MSSAVAIGAGVAVAAFLGRAGLVAWRRSRGGVGALGKAFYKGGFEPRMNKKEASLILSLNERTITKDKIRKAHRTLMLLNHPDRGGSPYLATKVNEAKEFLEKSV</sequence>
<reference key="1">
    <citation type="journal article" date="2003" name="Nature">
        <title>The genome sequence of the filamentous fungus Neurospora crassa.</title>
        <authorList>
            <person name="Galagan J.E."/>
            <person name="Calvo S.E."/>
            <person name="Borkovich K.A."/>
            <person name="Selker E.U."/>
            <person name="Read N.D."/>
            <person name="Jaffe D.B."/>
            <person name="FitzHugh W."/>
            <person name="Ma L.-J."/>
            <person name="Smirnov S."/>
            <person name="Purcell S."/>
            <person name="Rehman B."/>
            <person name="Elkins T."/>
            <person name="Engels R."/>
            <person name="Wang S."/>
            <person name="Nielsen C.B."/>
            <person name="Butler J."/>
            <person name="Endrizzi M."/>
            <person name="Qui D."/>
            <person name="Ianakiev P."/>
            <person name="Bell-Pedersen D."/>
            <person name="Nelson M.A."/>
            <person name="Werner-Washburne M."/>
            <person name="Selitrennikoff C.P."/>
            <person name="Kinsey J.A."/>
            <person name="Braun E.L."/>
            <person name="Zelter A."/>
            <person name="Schulte U."/>
            <person name="Kothe G.O."/>
            <person name="Jedd G."/>
            <person name="Mewes H.-W."/>
            <person name="Staben C."/>
            <person name="Marcotte E."/>
            <person name="Greenberg D."/>
            <person name="Roy A."/>
            <person name="Foley K."/>
            <person name="Naylor J."/>
            <person name="Stange-Thomann N."/>
            <person name="Barrett R."/>
            <person name="Gnerre S."/>
            <person name="Kamal M."/>
            <person name="Kamvysselis M."/>
            <person name="Mauceli E.W."/>
            <person name="Bielke C."/>
            <person name="Rudd S."/>
            <person name="Frishman D."/>
            <person name="Krystofova S."/>
            <person name="Rasmussen C."/>
            <person name="Metzenberg R.L."/>
            <person name="Perkins D.D."/>
            <person name="Kroken S."/>
            <person name="Cogoni C."/>
            <person name="Macino G."/>
            <person name="Catcheside D.E.A."/>
            <person name="Li W."/>
            <person name="Pratt R.J."/>
            <person name="Osmani S.A."/>
            <person name="DeSouza C.P.C."/>
            <person name="Glass N.L."/>
            <person name="Orbach M.J."/>
            <person name="Berglund J.A."/>
            <person name="Voelker R."/>
            <person name="Yarden O."/>
            <person name="Plamann M."/>
            <person name="Seiler S."/>
            <person name="Dunlap J.C."/>
            <person name="Radford A."/>
            <person name="Aramayo R."/>
            <person name="Natvig D.O."/>
            <person name="Alex L.A."/>
            <person name="Mannhaupt G."/>
            <person name="Ebbole D.J."/>
            <person name="Freitag M."/>
            <person name="Paulsen I."/>
            <person name="Sachs M.S."/>
            <person name="Lander E.S."/>
            <person name="Nusbaum C."/>
            <person name="Birren B.W."/>
        </authorList>
    </citation>
    <scope>NUCLEOTIDE SEQUENCE [LARGE SCALE GENOMIC DNA]</scope>
    <source>
        <strain>ATCC 24698 / 74-OR23-1A / CBS 708.71 / DSM 1257 / FGSC 987</strain>
    </source>
</reference>
<evidence type="ECO:0000250" key="1"/>
<evidence type="ECO:0000255" key="2"/>
<evidence type="ECO:0000255" key="3">
    <source>
        <dbReference type="PROSITE-ProRule" id="PRU00286"/>
    </source>
</evidence>
<evidence type="ECO:0000305" key="4"/>
<organism>
    <name type="scientific">Neurospora crassa (strain ATCC 24698 / 74-OR23-1A / CBS 708.71 / DSM 1257 / FGSC 987)</name>
    <dbReference type="NCBI Taxonomy" id="367110"/>
    <lineage>
        <taxon>Eukaryota</taxon>
        <taxon>Fungi</taxon>
        <taxon>Dikarya</taxon>
        <taxon>Ascomycota</taxon>
        <taxon>Pezizomycotina</taxon>
        <taxon>Sordariomycetes</taxon>
        <taxon>Sordariomycetidae</taxon>
        <taxon>Sordariales</taxon>
        <taxon>Sordariaceae</taxon>
        <taxon>Neurospora</taxon>
    </lineage>
</organism>
<protein>
    <recommendedName>
        <fullName>Mitochondrial import inner membrane translocase subunit tim14</fullName>
    </recommendedName>
    <alternativeName>
        <fullName>Presequence translocated-associated motor subunit pam18</fullName>
    </alternativeName>
</protein>
<dbReference type="EMBL" id="CM002238">
    <property type="protein sequence ID" value="EAA27149.1"/>
    <property type="molecule type" value="Genomic_DNA"/>
</dbReference>
<dbReference type="RefSeq" id="XP_956385.1">
    <property type="nucleotide sequence ID" value="XM_951292.3"/>
</dbReference>
<dbReference type="SMR" id="Q7RX75"/>
<dbReference type="STRING" id="367110.Q7RX75"/>
<dbReference type="PaxDb" id="5141-EFNCRP00000000075"/>
<dbReference type="EnsemblFungi" id="EAA27149">
    <property type="protein sequence ID" value="EAA27149"/>
    <property type="gene ID" value="NCU00075"/>
</dbReference>
<dbReference type="GeneID" id="3872523"/>
<dbReference type="KEGG" id="ncr:NCU00075"/>
<dbReference type="VEuPathDB" id="FungiDB:NCU00075"/>
<dbReference type="HOGENOM" id="CLU_017633_13_3_1"/>
<dbReference type="InParanoid" id="Q7RX75"/>
<dbReference type="OrthoDB" id="240298at2759"/>
<dbReference type="Proteomes" id="UP000001805">
    <property type="component" value="Chromosome 3, Linkage Group III"/>
</dbReference>
<dbReference type="GO" id="GO:0001405">
    <property type="term" value="C:PAM complex, Tim23 associated import motor"/>
    <property type="evidence" value="ECO:0000318"/>
    <property type="project" value="GO_Central"/>
</dbReference>
<dbReference type="GO" id="GO:0001671">
    <property type="term" value="F:ATPase activator activity"/>
    <property type="evidence" value="ECO:0000318"/>
    <property type="project" value="GO_Central"/>
</dbReference>
<dbReference type="GO" id="GO:0030150">
    <property type="term" value="P:protein import into mitochondrial matrix"/>
    <property type="evidence" value="ECO:0000318"/>
    <property type="project" value="GO_Central"/>
</dbReference>
<dbReference type="CDD" id="cd06257">
    <property type="entry name" value="DnaJ"/>
    <property type="match status" value="1"/>
</dbReference>
<dbReference type="FunFam" id="1.10.287.110:FF:000001">
    <property type="entry name" value="Import inner membrane translocase subunit tim14"/>
    <property type="match status" value="1"/>
</dbReference>
<dbReference type="Gene3D" id="1.10.287.110">
    <property type="entry name" value="DnaJ domain"/>
    <property type="match status" value="1"/>
</dbReference>
<dbReference type="InterPro" id="IPR001623">
    <property type="entry name" value="DnaJ_domain"/>
</dbReference>
<dbReference type="InterPro" id="IPR036869">
    <property type="entry name" value="J_dom_sf"/>
</dbReference>
<dbReference type="PANTHER" id="PTHR12763">
    <property type="match status" value="1"/>
</dbReference>
<dbReference type="PANTHER" id="PTHR12763:SF28">
    <property type="entry name" value="GEO10507P1-RELATED"/>
    <property type="match status" value="1"/>
</dbReference>
<dbReference type="SUPFAM" id="SSF46565">
    <property type="entry name" value="Chaperone J-domain"/>
    <property type="match status" value="1"/>
</dbReference>
<dbReference type="PROSITE" id="PS50076">
    <property type="entry name" value="DNAJ_2"/>
    <property type="match status" value="1"/>
</dbReference>
<accession>Q7RX75</accession>
<comment type="function">
    <text evidence="1">Essential component of the PAM complex, a complex required for the translocation of transit peptide-containing proteins from the inner membrane into the mitochondrial matrix in an ATP-dependent manner. In the complex, it is required to stimulate activity of mtHSP70 (hsp70-5) (By similarity).</text>
</comment>
<comment type="subunit">
    <text evidence="1">Heterodimer with un-4/pam16. Component of the PAM complex, at least composed of hsp70-5/ssc1, grpe/mge1, tim44, un-4/pam16, pam17 and tim14/pam18 (By similarity).</text>
</comment>
<comment type="subcellular location">
    <subcellularLocation>
        <location evidence="1">Mitochondrion inner membrane</location>
        <topology evidence="1">Single-pass membrane protein</topology>
    </subcellularLocation>
</comment>
<comment type="domain">
    <text evidence="1">The J domain is essential for co-chaperone activity and mediates the heterodimerization with the J-like domain of PAM16.</text>
</comment>
<comment type="similarity">
    <text evidence="4">Belongs to the TIM14 family.</text>
</comment>
<keyword id="KW-0143">Chaperone</keyword>
<keyword id="KW-0472">Membrane</keyword>
<keyword id="KW-0496">Mitochondrion</keyword>
<keyword id="KW-0999">Mitochondrion inner membrane</keyword>
<keyword id="KW-0653">Protein transport</keyword>
<keyword id="KW-1185">Reference proteome</keyword>
<keyword id="KW-0811">Translocation</keyword>
<keyword id="KW-0812">Transmembrane</keyword>
<keyword id="KW-1133">Transmembrane helix</keyword>
<keyword id="KW-0813">Transport</keyword>
<gene>
    <name type="primary">tim14</name>
    <name type="synonym">pam18</name>
    <name type="ORF">NCU00075</name>
</gene>
<name>TIM14_NEUCR</name>
<feature type="chain" id="PRO_0000071115" description="Mitochondrial import inner membrane translocase subunit tim14">
    <location>
        <begin position="1"/>
        <end position="105"/>
    </location>
</feature>
<feature type="topological domain" description="Mitochondrial intermembrane" evidence="2">
    <location>
        <begin position="1"/>
        <end position="3"/>
    </location>
</feature>
<feature type="transmembrane region" description="Helical" evidence="2">
    <location>
        <begin position="4"/>
        <end position="23"/>
    </location>
</feature>
<feature type="topological domain" description="Mitochondrial matrix" evidence="2">
    <location>
        <begin position="24"/>
        <end position="105"/>
    </location>
</feature>
<feature type="domain" description="J" evidence="3">
    <location>
        <begin position="52"/>
        <end position="105"/>
    </location>
</feature>
<proteinExistence type="inferred from homology"/>